<sequence>MSRIAKAPITVPSGVEVVVNGQNVAVKGNKGELVCLLNDAVVIKLEEGVIRFAPAEGFKDGWAQAGTARANVNNMVLGVTEGFKKTLLLQGVGYRAQVAGTIVNLTLGFSHPVAYQLPEGITAVAKSQTEIILEGADKQVVGQAAAKIRAFRPPEPYKGKGVRYANEIVRRKEAKKK</sequence>
<gene>
    <name evidence="1" type="primary">rplF</name>
    <name type="ordered locus">Ping_3509</name>
</gene>
<evidence type="ECO:0000255" key="1">
    <source>
        <dbReference type="HAMAP-Rule" id="MF_01365"/>
    </source>
</evidence>
<evidence type="ECO:0000305" key="2"/>
<reference key="1">
    <citation type="journal article" date="2008" name="BMC Genomics">
        <title>Genomics of an extreme psychrophile, Psychromonas ingrahamii.</title>
        <authorList>
            <person name="Riley M."/>
            <person name="Staley J.T."/>
            <person name="Danchin A."/>
            <person name="Wang T.Z."/>
            <person name="Brettin T.S."/>
            <person name="Hauser L.J."/>
            <person name="Land M.L."/>
            <person name="Thompson L.S."/>
        </authorList>
    </citation>
    <scope>NUCLEOTIDE SEQUENCE [LARGE SCALE GENOMIC DNA]</scope>
    <source>
        <strain>DSM 17664 / CCUG 51855 / 37</strain>
    </source>
</reference>
<name>RL6_PSYIN</name>
<accession>A1T0C7</accession>
<protein>
    <recommendedName>
        <fullName evidence="1">Large ribosomal subunit protein uL6</fullName>
    </recommendedName>
    <alternativeName>
        <fullName evidence="2">50S ribosomal protein L6</fullName>
    </alternativeName>
</protein>
<organism>
    <name type="scientific">Psychromonas ingrahamii (strain DSM 17664 / CCUG 51855 / 37)</name>
    <dbReference type="NCBI Taxonomy" id="357804"/>
    <lineage>
        <taxon>Bacteria</taxon>
        <taxon>Pseudomonadati</taxon>
        <taxon>Pseudomonadota</taxon>
        <taxon>Gammaproteobacteria</taxon>
        <taxon>Alteromonadales</taxon>
        <taxon>Psychromonadaceae</taxon>
        <taxon>Psychromonas</taxon>
    </lineage>
</organism>
<dbReference type="EMBL" id="CP000510">
    <property type="protein sequence ID" value="ABM05192.1"/>
    <property type="molecule type" value="Genomic_DNA"/>
</dbReference>
<dbReference type="RefSeq" id="WP_011771740.1">
    <property type="nucleotide sequence ID" value="NC_008709.1"/>
</dbReference>
<dbReference type="SMR" id="A1T0C7"/>
<dbReference type="STRING" id="357804.Ping_3509"/>
<dbReference type="KEGG" id="pin:Ping_3509"/>
<dbReference type="eggNOG" id="COG0097">
    <property type="taxonomic scope" value="Bacteria"/>
</dbReference>
<dbReference type="HOGENOM" id="CLU_065464_1_2_6"/>
<dbReference type="OrthoDB" id="9805007at2"/>
<dbReference type="Proteomes" id="UP000000639">
    <property type="component" value="Chromosome"/>
</dbReference>
<dbReference type="GO" id="GO:0022625">
    <property type="term" value="C:cytosolic large ribosomal subunit"/>
    <property type="evidence" value="ECO:0007669"/>
    <property type="project" value="TreeGrafter"/>
</dbReference>
<dbReference type="GO" id="GO:0019843">
    <property type="term" value="F:rRNA binding"/>
    <property type="evidence" value="ECO:0007669"/>
    <property type="project" value="UniProtKB-UniRule"/>
</dbReference>
<dbReference type="GO" id="GO:0003735">
    <property type="term" value="F:structural constituent of ribosome"/>
    <property type="evidence" value="ECO:0007669"/>
    <property type="project" value="InterPro"/>
</dbReference>
<dbReference type="GO" id="GO:0002181">
    <property type="term" value="P:cytoplasmic translation"/>
    <property type="evidence" value="ECO:0007669"/>
    <property type="project" value="TreeGrafter"/>
</dbReference>
<dbReference type="FunFam" id="3.90.930.12:FF:000001">
    <property type="entry name" value="50S ribosomal protein L6"/>
    <property type="match status" value="1"/>
</dbReference>
<dbReference type="FunFam" id="3.90.930.12:FF:000002">
    <property type="entry name" value="50S ribosomal protein L6"/>
    <property type="match status" value="1"/>
</dbReference>
<dbReference type="Gene3D" id="3.90.930.12">
    <property type="entry name" value="Ribosomal protein L6, alpha-beta domain"/>
    <property type="match status" value="2"/>
</dbReference>
<dbReference type="HAMAP" id="MF_01365_B">
    <property type="entry name" value="Ribosomal_uL6_B"/>
    <property type="match status" value="1"/>
</dbReference>
<dbReference type="InterPro" id="IPR000702">
    <property type="entry name" value="Ribosomal_uL6-like"/>
</dbReference>
<dbReference type="InterPro" id="IPR036789">
    <property type="entry name" value="Ribosomal_uL6-like_a/b-dom_sf"/>
</dbReference>
<dbReference type="InterPro" id="IPR020040">
    <property type="entry name" value="Ribosomal_uL6_a/b-dom"/>
</dbReference>
<dbReference type="InterPro" id="IPR019906">
    <property type="entry name" value="Ribosomal_uL6_bac-type"/>
</dbReference>
<dbReference type="InterPro" id="IPR002358">
    <property type="entry name" value="Ribosomal_uL6_CS"/>
</dbReference>
<dbReference type="NCBIfam" id="TIGR03654">
    <property type="entry name" value="L6_bact"/>
    <property type="match status" value="1"/>
</dbReference>
<dbReference type="PANTHER" id="PTHR11655">
    <property type="entry name" value="60S/50S RIBOSOMAL PROTEIN L6/L9"/>
    <property type="match status" value="1"/>
</dbReference>
<dbReference type="PANTHER" id="PTHR11655:SF14">
    <property type="entry name" value="LARGE RIBOSOMAL SUBUNIT PROTEIN UL6M"/>
    <property type="match status" value="1"/>
</dbReference>
<dbReference type="Pfam" id="PF00347">
    <property type="entry name" value="Ribosomal_L6"/>
    <property type="match status" value="2"/>
</dbReference>
<dbReference type="PIRSF" id="PIRSF002162">
    <property type="entry name" value="Ribosomal_L6"/>
    <property type="match status" value="1"/>
</dbReference>
<dbReference type="PRINTS" id="PR00059">
    <property type="entry name" value="RIBOSOMALL6"/>
</dbReference>
<dbReference type="SUPFAM" id="SSF56053">
    <property type="entry name" value="Ribosomal protein L6"/>
    <property type="match status" value="2"/>
</dbReference>
<dbReference type="PROSITE" id="PS00525">
    <property type="entry name" value="RIBOSOMAL_L6_1"/>
    <property type="match status" value="1"/>
</dbReference>
<comment type="function">
    <text evidence="1">This protein binds to the 23S rRNA, and is important in its secondary structure. It is located near the subunit interface in the base of the L7/L12 stalk, and near the tRNA binding site of the peptidyltransferase center.</text>
</comment>
<comment type="subunit">
    <text evidence="1">Part of the 50S ribosomal subunit.</text>
</comment>
<comment type="similarity">
    <text evidence="1">Belongs to the universal ribosomal protein uL6 family.</text>
</comment>
<proteinExistence type="inferred from homology"/>
<keyword id="KW-1185">Reference proteome</keyword>
<keyword id="KW-0687">Ribonucleoprotein</keyword>
<keyword id="KW-0689">Ribosomal protein</keyword>
<keyword id="KW-0694">RNA-binding</keyword>
<keyword id="KW-0699">rRNA-binding</keyword>
<feature type="chain" id="PRO_1000055291" description="Large ribosomal subunit protein uL6">
    <location>
        <begin position="1"/>
        <end position="177"/>
    </location>
</feature>